<organism>
    <name type="scientific">Staphylococcus aureus (strain JH1)</name>
    <dbReference type="NCBI Taxonomy" id="359787"/>
    <lineage>
        <taxon>Bacteria</taxon>
        <taxon>Bacillati</taxon>
        <taxon>Bacillota</taxon>
        <taxon>Bacilli</taxon>
        <taxon>Bacillales</taxon>
        <taxon>Staphylococcaceae</taxon>
        <taxon>Staphylococcus</taxon>
    </lineage>
</organism>
<sequence>MKIQDYTKQMVDEKSFIDMAYTLLNDKGETMNLYDIIDEFRALGDYEYEEIENRVVQFYTDLNTDGRFLNVGENLWGLRDWYSVDDIEEKIAPTIQKFDILDADDEEDQNLKLLGEDEMDDDDDIPAQTDDQEELNDPEDEQVEEEINHSDIVIEEDEDELDEDEEVFEDEEDFND</sequence>
<proteinExistence type="inferred from homology"/>
<dbReference type="EMBL" id="CP000736">
    <property type="protein sequence ID" value="ABR53031.1"/>
    <property type="molecule type" value="Genomic_DNA"/>
</dbReference>
<dbReference type="SMR" id="A6U3L3"/>
<dbReference type="KEGG" id="sah:SaurJH1_2202"/>
<dbReference type="HOGENOM" id="CLU_116648_1_0_9"/>
<dbReference type="GO" id="GO:0000428">
    <property type="term" value="C:DNA-directed RNA polymerase complex"/>
    <property type="evidence" value="ECO:0007669"/>
    <property type="project" value="UniProtKB-KW"/>
</dbReference>
<dbReference type="GO" id="GO:0003899">
    <property type="term" value="F:DNA-directed RNA polymerase activity"/>
    <property type="evidence" value="ECO:0007669"/>
    <property type="project" value="UniProtKB-UniRule"/>
</dbReference>
<dbReference type="GO" id="GO:0006351">
    <property type="term" value="P:DNA-templated transcription"/>
    <property type="evidence" value="ECO:0007669"/>
    <property type="project" value="InterPro"/>
</dbReference>
<dbReference type="GO" id="GO:0006355">
    <property type="term" value="P:regulation of DNA-templated transcription"/>
    <property type="evidence" value="ECO:0007669"/>
    <property type="project" value="UniProtKB-UniRule"/>
</dbReference>
<dbReference type="Gene3D" id="1.10.10.1250">
    <property type="entry name" value="RNA polymerase, subunit delta, N-terminal domain"/>
    <property type="match status" value="1"/>
</dbReference>
<dbReference type="HAMAP" id="MF_00357">
    <property type="entry name" value="RNApol_bact_RpoE"/>
    <property type="match status" value="1"/>
</dbReference>
<dbReference type="InterPro" id="IPR007759">
    <property type="entry name" value="Asxl_HARE-HTH"/>
</dbReference>
<dbReference type="InterPro" id="IPR038087">
    <property type="entry name" value="RNAP_delta_N_dom_sf"/>
</dbReference>
<dbReference type="InterPro" id="IPR029757">
    <property type="entry name" value="RpoE"/>
</dbReference>
<dbReference type="NCBIfam" id="TIGR04567">
    <property type="entry name" value="RNAP_delt_lowGC"/>
    <property type="match status" value="1"/>
</dbReference>
<dbReference type="Pfam" id="PF05066">
    <property type="entry name" value="HARE-HTH"/>
    <property type="match status" value="1"/>
</dbReference>
<dbReference type="PROSITE" id="PS51913">
    <property type="entry name" value="HTH_HARE"/>
    <property type="match status" value="1"/>
</dbReference>
<keyword id="KW-0240">DNA-directed RNA polymerase</keyword>
<keyword id="KW-0548">Nucleotidyltransferase</keyword>
<keyword id="KW-0804">Transcription</keyword>
<keyword id="KW-0808">Transferase</keyword>
<feature type="chain" id="PRO_1000079390" description="Probable DNA-directed RNA polymerase subunit delta">
    <location>
        <begin position="1"/>
        <end position="176"/>
    </location>
</feature>
<feature type="domain" description="HTH HARE-type" evidence="2">
    <location>
        <begin position="14"/>
        <end position="81"/>
    </location>
</feature>
<feature type="region of interest" description="Disordered" evidence="3">
    <location>
        <begin position="114"/>
        <end position="176"/>
    </location>
</feature>
<feature type="compositionally biased region" description="Acidic residues" evidence="3">
    <location>
        <begin position="116"/>
        <end position="145"/>
    </location>
</feature>
<feature type="compositionally biased region" description="Acidic residues" evidence="3">
    <location>
        <begin position="153"/>
        <end position="176"/>
    </location>
</feature>
<evidence type="ECO:0000255" key="1">
    <source>
        <dbReference type="HAMAP-Rule" id="MF_00357"/>
    </source>
</evidence>
<evidence type="ECO:0000255" key="2">
    <source>
        <dbReference type="PROSITE-ProRule" id="PRU01261"/>
    </source>
</evidence>
<evidence type="ECO:0000256" key="3">
    <source>
        <dbReference type="SAM" id="MobiDB-lite"/>
    </source>
</evidence>
<gene>
    <name evidence="1" type="primary">rpoE</name>
    <name type="ordered locus">SaurJH1_2202</name>
</gene>
<protein>
    <recommendedName>
        <fullName evidence="1">Probable DNA-directed RNA polymerase subunit delta</fullName>
    </recommendedName>
    <alternativeName>
        <fullName evidence="1">RNAP delta factor</fullName>
    </alternativeName>
</protein>
<comment type="function">
    <text evidence="1">Participates in both the initiation and recycling phases of transcription. In the presence of the delta subunit, RNAP displays an increased specificity of transcription, a decreased affinity for nucleic acids, and an increased efficiency of RNA synthesis because of enhanced recycling.</text>
</comment>
<comment type="subunit">
    <text evidence="1">RNAP is composed of a core of 2 alpha, a beta and a beta' subunits. The core is associated with a delta subunit and one of several sigma factors.</text>
</comment>
<comment type="similarity">
    <text evidence="1">Belongs to the RpoE family.</text>
</comment>
<reference key="1">
    <citation type="submission" date="2007-06" db="EMBL/GenBank/DDBJ databases">
        <title>Complete sequence of chromosome of Staphylococcus aureus subsp. aureus JH1.</title>
        <authorList>
            <consortium name="US DOE Joint Genome Institute"/>
            <person name="Copeland A."/>
            <person name="Lucas S."/>
            <person name="Lapidus A."/>
            <person name="Barry K."/>
            <person name="Detter J.C."/>
            <person name="Glavina del Rio T."/>
            <person name="Hammon N."/>
            <person name="Israni S."/>
            <person name="Dalin E."/>
            <person name="Tice H."/>
            <person name="Pitluck S."/>
            <person name="Chain P."/>
            <person name="Malfatti S."/>
            <person name="Shin M."/>
            <person name="Vergez L."/>
            <person name="Schmutz J."/>
            <person name="Larimer F."/>
            <person name="Land M."/>
            <person name="Hauser L."/>
            <person name="Kyrpides N."/>
            <person name="Ivanova N."/>
            <person name="Tomasz A."/>
            <person name="Richardson P."/>
        </authorList>
    </citation>
    <scope>NUCLEOTIDE SEQUENCE [LARGE SCALE GENOMIC DNA]</scope>
    <source>
        <strain>JH1</strain>
    </source>
</reference>
<accession>A6U3L3</accession>
<name>RPOE_STAA2</name>